<feature type="chain" id="PRO_1000024065" description="Dihydroorotase">
    <location>
        <begin position="1"/>
        <end position="346"/>
    </location>
</feature>
<feature type="active site" evidence="1">
    <location>
        <position position="248"/>
    </location>
</feature>
<feature type="binding site" evidence="1">
    <location>
        <position position="14"/>
    </location>
    <ligand>
        <name>Zn(2+)</name>
        <dbReference type="ChEBI" id="CHEBI:29105"/>
        <label>1</label>
    </ligand>
</feature>
<feature type="binding site" evidence="1">
    <location>
        <begin position="16"/>
        <end position="18"/>
    </location>
    <ligand>
        <name>substrate</name>
    </ligand>
</feature>
<feature type="binding site" evidence="1">
    <location>
        <position position="16"/>
    </location>
    <ligand>
        <name>Zn(2+)</name>
        <dbReference type="ChEBI" id="CHEBI:29105"/>
        <label>1</label>
    </ligand>
</feature>
<feature type="binding site" evidence="1">
    <location>
        <position position="42"/>
    </location>
    <ligand>
        <name>substrate</name>
    </ligand>
</feature>
<feature type="binding site" description="via carbamate group" evidence="1">
    <location>
        <position position="100"/>
    </location>
    <ligand>
        <name>Zn(2+)</name>
        <dbReference type="ChEBI" id="CHEBI:29105"/>
        <label>1</label>
    </ligand>
</feature>
<feature type="binding site" description="via carbamate group" evidence="1">
    <location>
        <position position="100"/>
    </location>
    <ligand>
        <name>Zn(2+)</name>
        <dbReference type="ChEBI" id="CHEBI:29105"/>
        <label>2</label>
    </ligand>
</feature>
<feature type="binding site" evidence="1">
    <location>
        <position position="137"/>
    </location>
    <ligand>
        <name>substrate</name>
    </ligand>
</feature>
<feature type="binding site" evidence="1">
    <location>
        <position position="137"/>
    </location>
    <ligand>
        <name>Zn(2+)</name>
        <dbReference type="ChEBI" id="CHEBI:29105"/>
        <label>2</label>
    </ligand>
</feature>
<feature type="binding site" evidence="1">
    <location>
        <position position="175"/>
    </location>
    <ligand>
        <name>Zn(2+)</name>
        <dbReference type="ChEBI" id="CHEBI:29105"/>
        <label>2</label>
    </ligand>
</feature>
<feature type="binding site" evidence="1">
    <location>
        <position position="220"/>
    </location>
    <ligand>
        <name>substrate</name>
    </ligand>
</feature>
<feature type="binding site" evidence="1">
    <location>
        <position position="248"/>
    </location>
    <ligand>
        <name>Zn(2+)</name>
        <dbReference type="ChEBI" id="CHEBI:29105"/>
        <label>1</label>
    </ligand>
</feature>
<feature type="binding site" evidence="1">
    <location>
        <position position="252"/>
    </location>
    <ligand>
        <name>substrate</name>
    </ligand>
</feature>
<feature type="binding site" evidence="1">
    <location>
        <position position="264"/>
    </location>
    <ligand>
        <name>substrate</name>
    </ligand>
</feature>
<feature type="modified residue" description="N6-carboxylysine" evidence="1">
    <location>
        <position position="100"/>
    </location>
</feature>
<reference key="1">
    <citation type="submission" date="2006-05" db="EMBL/GenBank/DDBJ databases">
        <title>Complete sequence of chromosome of Silicibacter sp. TM1040.</title>
        <authorList>
            <consortium name="US DOE Joint Genome Institute"/>
            <person name="Copeland A."/>
            <person name="Lucas S."/>
            <person name="Lapidus A."/>
            <person name="Barry K."/>
            <person name="Detter J.C."/>
            <person name="Glavina del Rio T."/>
            <person name="Hammon N."/>
            <person name="Israni S."/>
            <person name="Dalin E."/>
            <person name="Tice H."/>
            <person name="Pitluck S."/>
            <person name="Brettin T."/>
            <person name="Bruce D."/>
            <person name="Han C."/>
            <person name="Tapia R."/>
            <person name="Goodwin L."/>
            <person name="Thompson L.S."/>
            <person name="Gilna P."/>
            <person name="Schmutz J."/>
            <person name="Larimer F."/>
            <person name="Land M."/>
            <person name="Hauser L."/>
            <person name="Kyrpides N."/>
            <person name="Kim E."/>
            <person name="Belas R."/>
            <person name="Moran M.A."/>
            <person name="Buchan A."/>
            <person name="Gonzalez J.M."/>
            <person name="Schell M.A."/>
            <person name="Sun F."/>
            <person name="Richardson P."/>
        </authorList>
    </citation>
    <scope>NUCLEOTIDE SEQUENCE [LARGE SCALE GENOMIC DNA]</scope>
    <source>
        <strain>TM1040</strain>
    </source>
</reference>
<sequence length="346" mass="37869">MTQSLTITRPDDWHLHLRDGDMLRAVLPETARHFGRAIIMPNLVPPVVTGAEASAYRDRILAALPEGMTFEPLMTLYLTEDTDPADVAAAHASGLVKAVKLYPAGATTNSSSGVRDFDKVRPVLEKMAEIGLPLCTHGEVTDHDIDIFDREAVFIDRVLDPIRQSTPGLRVVMEHITTKDAADYVRSQDKDLGATITTHHLIINRNHILVGGIKPHYYCLPVAKREEHRLALRQAATSGDARFFLGTDSAPHTDANKLQTCGCAGCFTATNTMALLAHVFEEEGALDKLEGFASKNGPAFYRLPENDGQITLVKQDAPVAFPEQIDTPDGPVTVFDPSFAVHWTVT</sequence>
<accession>Q1GFQ7</accession>
<organism>
    <name type="scientific">Ruegeria sp. (strain TM1040)</name>
    <name type="common">Silicibacter sp.</name>
    <dbReference type="NCBI Taxonomy" id="292414"/>
    <lineage>
        <taxon>Bacteria</taxon>
        <taxon>Pseudomonadati</taxon>
        <taxon>Pseudomonadota</taxon>
        <taxon>Alphaproteobacteria</taxon>
        <taxon>Rhodobacterales</taxon>
        <taxon>Roseobacteraceae</taxon>
        <taxon>Ruegeria</taxon>
    </lineage>
</organism>
<proteinExistence type="inferred from homology"/>
<evidence type="ECO:0000255" key="1">
    <source>
        <dbReference type="HAMAP-Rule" id="MF_00219"/>
    </source>
</evidence>
<keyword id="KW-0378">Hydrolase</keyword>
<keyword id="KW-0479">Metal-binding</keyword>
<keyword id="KW-0665">Pyrimidine biosynthesis</keyword>
<keyword id="KW-1185">Reference proteome</keyword>
<keyword id="KW-0862">Zinc</keyword>
<gene>
    <name evidence="1" type="primary">pyrC</name>
    <name type="ordered locus">TM1040_1776</name>
</gene>
<comment type="function">
    <text evidence="1">Catalyzes the reversible cyclization of carbamoyl aspartate to dihydroorotate.</text>
</comment>
<comment type="catalytic activity">
    <reaction evidence="1">
        <text>(S)-dihydroorotate + H2O = N-carbamoyl-L-aspartate + H(+)</text>
        <dbReference type="Rhea" id="RHEA:24296"/>
        <dbReference type="ChEBI" id="CHEBI:15377"/>
        <dbReference type="ChEBI" id="CHEBI:15378"/>
        <dbReference type="ChEBI" id="CHEBI:30864"/>
        <dbReference type="ChEBI" id="CHEBI:32814"/>
        <dbReference type="EC" id="3.5.2.3"/>
    </reaction>
</comment>
<comment type="cofactor">
    <cofactor evidence="1">
        <name>Zn(2+)</name>
        <dbReference type="ChEBI" id="CHEBI:29105"/>
    </cofactor>
    <text evidence="1">Binds 2 Zn(2+) ions per subunit.</text>
</comment>
<comment type="pathway">
    <text evidence="1">Pyrimidine metabolism; UMP biosynthesis via de novo pathway; (S)-dihydroorotate from bicarbonate: step 3/3.</text>
</comment>
<comment type="subunit">
    <text evidence="1">Homodimer.</text>
</comment>
<comment type="similarity">
    <text evidence="1">Belongs to the metallo-dependent hydrolases superfamily. DHOase family. Class II DHOase subfamily.</text>
</comment>
<dbReference type="EC" id="3.5.2.3" evidence="1"/>
<dbReference type="EMBL" id="CP000377">
    <property type="protein sequence ID" value="ABF64509.1"/>
    <property type="molecule type" value="Genomic_DNA"/>
</dbReference>
<dbReference type="RefSeq" id="WP_011539104.1">
    <property type="nucleotide sequence ID" value="NC_008044.1"/>
</dbReference>
<dbReference type="SMR" id="Q1GFQ7"/>
<dbReference type="STRING" id="292414.TM1040_1776"/>
<dbReference type="MEROPS" id="M38.A02"/>
<dbReference type="KEGG" id="sit:TM1040_1776"/>
<dbReference type="eggNOG" id="COG0418">
    <property type="taxonomic scope" value="Bacteria"/>
</dbReference>
<dbReference type="HOGENOM" id="CLU_041558_1_0_5"/>
<dbReference type="OrthoDB" id="9808095at2"/>
<dbReference type="UniPathway" id="UPA00070">
    <property type="reaction ID" value="UER00117"/>
</dbReference>
<dbReference type="Proteomes" id="UP000000636">
    <property type="component" value="Chromosome"/>
</dbReference>
<dbReference type="GO" id="GO:0005829">
    <property type="term" value="C:cytosol"/>
    <property type="evidence" value="ECO:0007669"/>
    <property type="project" value="TreeGrafter"/>
</dbReference>
<dbReference type="GO" id="GO:0004151">
    <property type="term" value="F:dihydroorotase activity"/>
    <property type="evidence" value="ECO:0007669"/>
    <property type="project" value="UniProtKB-UniRule"/>
</dbReference>
<dbReference type="GO" id="GO:0008270">
    <property type="term" value="F:zinc ion binding"/>
    <property type="evidence" value="ECO:0007669"/>
    <property type="project" value="UniProtKB-UniRule"/>
</dbReference>
<dbReference type="GO" id="GO:0006207">
    <property type="term" value="P:'de novo' pyrimidine nucleobase biosynthetic process"/>
    <property type="evidence" value="ECO:0007669"/>
    <property type="project" value="TreeGrafter"/>
</dbReference>
<dbReference type="GO" id="GO:0044205">
    <property type="term" value="P:'de novo' UMP biosynthetic process"/>
    <property type="evidence" value="ECO:0007669"/>
    <property type="project" value="UniProtKB-UniRule"/>
</dbReference>
<dbReference type="CDD" id="cd01294">
    <property type="entry name" value="DHOase"/>
    <property type="match status" value="1"/>
</dbReference>
<dbReference type="Gene3D" id="3.20.20.140">
    <property type="entry name" value="Metal-dependent hydrolases"/>
    <property type="match status" value="1"/>
</dbReference>
<dbReference type="HAMAP" id="MF_00219">
    <property type="entry name" value="PyrC_classII"/>
    <property type="match status" value="1"/>
</dbReference>
<dbReference type="InterPro" id="IPR006680">
    <property type="entry name" value="Amidohydro-rel"/>
</dbReference>
<dbReference type="InterPro" id="IPR004721">
    <property type="entry name" value="DHOdimr"/>
</dbReference>
<dbReference type="InterPro" id="IPR002195">
    <property type="entry name" value="Dihydroorotase_CS"/>
</dbReference>
<dbReference type="InterPro" id="IPR032466">
    <property type="entry name" value="Metal_Hydrolase"/>
</dbReference>
<dbReference type="NCBIfam" id="TIGR00856">
    <property type="entry name" value="pyrC_dimer"/>
    <property type="match status" value="1"/>
</dbReference>
<dbReference type="PANTHER" id="PTHR43137">
    <property type="entry name" value="DIHYDROOROTASE"/>
    <property type="match status" value="1"/>
</dbReference>
<dbReference type="PANTHER" id="PTHR43137:SF1">
    <property type="entry name" value="DIHYDROOROTASE"/>
    <property type="match status" value="1"/>
</dbReference>
<dbReference type="Pfam" id="PF01979">
    <property type="entry name" value="Amidohydro_1"/>
    <property type="match status" value="1"/>
</dbReference>
<dbReference type="PIRSF" id="PIRSF001237">
    <property type="entry name" value="DHOdimr"/>
    <property type="match status" value="1"/>
</dbReference>
<dbReference type="SUPFAM" id="SSF51556">
    <property type="entry name" value="Metallo-dependent hydrolases"/>
    <property type="match status" value="1"/>
</dbReference>
<dbReference type="PROSITE" id="PS00482">
    <property type="entry name" value="DIHYDROOROTASE_1"/>
    <property type="match status" value="1"/>
</dbReference>
<dbReference type="PROSITE" id="PS00483">
    <property type="entry name" value="DIHYDROOROTASE_2"/>
    <property type="match status" value="1"/>
</dbReference>
<name>PYRC_RUEST</name>
<protein>
    <recommendedName>
        <fullName evidence="1">Dihydroorotase</fullName>
        <shortName evidence="1">DHOase</shortName>
        <ecNumber evidence="1">3.5.2.3</ecNumber>
    </recommendedName>
</protein>